<dbReference type="EMBL" id="AE000657">
    <property type="protein sequence ID" value="AAC06942.1"/>
    <property type="molecule type" value="Genomic_DNA"/>
</dbReference>
<dbReference type="PIR" id="C70368">
    <property type="entry name" value="C70368"/>
</dbReference>
<dbReference type="RefSeq" id="NP_213535.1">
    <property type="nucleotide sequence ID" value="NC_000918.1"/>
</dbReference>
<dbReference type="RefSeq" id="WP_010880473.1">
    <property type="nucleotide sequence ID" value="NC_000918.1"/>
</dbReference>
<dbReference type="SMR" id="O66974"/>
<dbReference type="FunCoup" id="O66974">
    <property type="interactions" value="46"/>
</dbReference>
<dbReference type="STRING" id="224324.aq_778"/>
<dbReference type="EnsemblBacteria" id="AAC06942">
    <property type="protein sequence ID" value="AAC06942"/>
    <property type="gene ID" value="aq_778"/>
</dbReference>
<dbReference type="KEGG" id="aae:aq_778"/>
<dbReference type="PATRIC" id="fig|224324.8.peg.619"/>
<dbReference type="eggNOG" id="COG0391">
    <property type="taxonomic scope" value="Bacteria"/>
</dbReference>
<dbReference type="HOGENOM" id="CLU_044041_0_1_0"/>
<dbReference type="InParanoid" id="O66974"/>
<dbReference type="OrthoDB" id="9783842at2"/>
<dbReference type="Proteomes" id="UP000000798">
    <property type="component" value="Chromosome"/>
</dbReference>
<dbReference type="GO" id="GO:0005737">
    <property type="term" value="C:cytoplasm"/>
    <property type="evidence" value="ECO:0007669"/>
    <property type="project" value="UniProtKB-SubCell"/>
</dbReference>
<dbReference type="GO" id="GO:0043743">
    <property type="term" value="F:LPPG:FO 2-phospho-L-lactate transferase activity"/>
    <property type="evidence" value="ECO:0007669"/>
    <property type="project" value="InterPro"/>
</dbReference>
<dbReference type="GO" id="GO:0008360">
    <property type="term" value="P:regulation of cell shape"/>
    <property type="evidence" value="ECO:0007669"/>
    <property type="project" value="UniProtKB-UniRule"/>
</dbReference>
<dbReference type="CDD" id="cd07187">
    <property type="entry name" value="YvcK_like"/>
    <property type="match status" value="1"/>
</dbReference>
<dbReference type="Gene3D" id="3.40.50.10680">
    <property type="entry name" value="CofD-like domains"/>
    <property type="match status" value="1"/>
</dbReference>
<dbReference type="HAMAP" id="MF_00973">
    <property type="entry name" value="Gluconeogen_factor"/>
    <property type="match status" value="1"/>
</dbReference>
<dbReference type="InterPro" id="IPR002882">
    <property type="entry name" value="CofD"/>
</dbReference>
<dbReference type="InterPro" id="IPR038136">
    <property type="entry name" value="CofD-like_dom_sf"/>
</dbReference>
<dbReference type="InterPro" id="IPR010119">
    <property type="entry name" value="Gluconeogen_factor"/>
</dbReference>
<dbReference type="NCBIfam" id="TIGR01826">
    <property type="entry name" value="CofD_related"/>
    <property type="match status" value="1"/>
</dbReference>
<dbReference type="PANTHER" id="PTHR30135:SF3">
    <property type="entry name" value="GLUCONEOGENESIS FACTOR-RELATED"/>
    <property type="match status" value="1"/>
</dbReference>
<dbReference type="PANTHER" id="PTHR30135">
    <property type="entry name" value="UNCHARACTERIZED PROTEIN YVCK-RELATED"/>
    <property type="match status" value="1"/>
</dbReference>
<dbReference type="Pfam" id="PF01933">
    <property type="entry name" value="CofD"/>
    <property type="match status" value="1"/>
</dbReference>
<dbReference type="SUPFAM" id="SSF142338">
    <property type="entry name" value="CofD-like"/>
    <property type="match status" value="1"/>
</dbReference>
<feature type="chain" id="PRO_0000107802" description="Putative gluconeogenesis factor">
    <location>
        <begin position="1"/>
        <end position="328"/>
    </location>
</feature>
<organism>
    <name type="scientific">Aquifex aeolicus (strain VF5)</name>
    <dbReference type="NCBI Taxonomy" id="224324"/>
    <lineage>
        <taxon>Bacteria</taxon>
        <taxon>Pseudomonadati</taxon>
        <taxon>Aquificota</taxon>
        <taxon>Aquificia</taxon>
        <taxon>Aquificales</taxon>
        <taxon>Aquificaceae</taxon>
        <taxon>Aquifex</taxon>
    </lineage>
</organism>
<accession>O66974</accession>
<proteinExistence type="inferred from homology"/>
<sequence>MKKVNVVAIGGGTGLSSLLRGLKIEVGRSIGRLSAIVTVADSGGSTGRLRKIYNIPAPGDIRNCIVALSDAEELMQKLFQYRFKGDGLEGHAFGNLFLTALTDITGSFLKAIKETSKILKTKGDIIPSTYENVNLVAEFDDGKVIKGEEEITEYGKKGHKVVNIWLEPKNPKAPEEAIERIKEADLIIIGPGSLFTSILPNFLVPQIREAVKESRALKVFVVNVMTQPGETDNFTAWDHIDTFLKFSGIDLVDVAVVNTQMPSNGLLKKYLEQNQEPVTPDVGRIGREGITVYAENLIGESGDFVRHDPQKLTEVILKILENELLSKV</sequence>
<keyword id="KW-0963">Cytoplasm</keyword>
<keyword id="KW-1185">Reference proteome</keyword>
<protein>
    <recommendedName>
        <fullName evidence="1">Putative gluconeogenesis factor</fullName>
    </recommendedName>
</protein>
<comment type="function">
    <text evidence="1">Required for morphogenesis under gluconeogenic growth conditions.</text>
</comment>
<comment type="subcellular location">
    <subcellularLocation>
        <location evidence="1">Cytoplasm</location>
    </subcellularLocation>
</comment>
<comment type="similarity">
    <text evidence="1">Belongs to the gluconeogenesis factor family.</text>
</comment>
<gene>
    <name type="ordered locus">aq_778</name>
</gene>
<evidence type="ECO:0000255" key="1">
    <source>
        <dbReference type="HAMAP-Rule" id="MF_00973"/>
    </source>
</evidence>
<reference key="1">
    <citation type="journal article" date="1998" name="Nature">
        <title>The complete genome of the hyperthermophilic bacterium Aquifex aeolicus.</title>
        <authorList>
            <person name="Deckert G."/>
            <person name="Warren P.V."/>
            <person name="Gaasterland T."/>
            <person name="Young W.G."/>
            <person name="Lenox A.L."/>
            <person name="Graham D.E."/>
            <person name="Overbeek R."/>
            <person name="Snead M.A."/>
            <person name="Keller M."/>
            <person name="Aujay M."/>
            <person name="Huber R."/>
            <person name="Feldman R.A."/>
            <person name="Short J.M."/>
            <person name="Olsen G.J."/>
            <person name="Swanson R.V."/>
        </authorList>
    </citation>
    <scope>NUCLEOTIDE SEQUENCE [LARGE SCALE GENOMIC DNA]</scope>
    <source>
        <strain>VF5</strain>
    </source>
</reference>
<name>GNGF_AQUAE</name>